<accession>Q65JQ6</accession>
<accession>Q62V61</accession>
<protein>
    <recommendedName>
        <fullName evidence="1">Acyl carrier protein</fullName>
        <shortName evidence="1">ACP</shortName>
    </recommendedName>
</protein>
<name>ACP_BACLD</name>
<gene>
    <name evidence="1" type="primary">acpP</name>
    <name type="ordered locus">BLi01813</name>
    <name type="ordered locus">BL02316</name>
</gene>
<comment type="function">
    <text evidence="1">Carrier of the growing fatty acid chain in fatty acid biosynthesis.</text>
</comment>
<comment type="pathway">
    <text evidence="1">Lipid metabolism; fatty acid biosynthesis.</text>
</comment>
<comment type="subcellular location">
    <subcellularLocation>
        <location evidence="1">Cytoplasm</location>
    </subcellularLocation>
</comment>
<comment type="PTM">
    <text evidence="1">4'-phosphopantetheine is transferred from CoA to a specific serine of apo-ACP by AcpS. This modification is essential for activity because fatty acids are bound in thioester linkage to the sulfhydryl of the prosthetic group.</text>
</comment>
<comment type="similarity">
    <text evidence="1">Belongs to the acyl carrier protein (ACP) family.</text>
</comment>
<sequence>MADALERVTKIIVDRLGVDEADVTLEASFKEDLGADSLDVVELVMELEDEFDMEISDEDAEKIATVGDAVNYINSKQ</sequence>
<organism>
    <name type="scientific">Bacillus licheniformis (strain ATCC 14580 / DSM 13 / JCM 2505 / CCUG 7422 / NBRC 12200 / NCIMB 9375 / NCTC 10341 / NRRL NRS-1264 / Gibson 46)</name>
    <dbReference type="NCBI Taxonomy" id="279010"/>
    <lineage>
        <taxon>Bacteria</taxon>
        <taxon>Bacillati</taxon>
        <taxon>Bacillota</taxon>
        <taxon>Bacilli</taxon>
        <taxon>Bacillales</taxon>
        <taxon>Bacillaceae</taxon>
        <taxon>Bacillus</taxon>
    </lineage>
</organism>
<reference key="1">
    <citation type="journal article" date="2004" name="J. Mol. Microbiol. Biotechnol.">
        <title>The complete genome sequence of Bacillus licheniformis DSM13, an organism with great industrial potential.</title>
        <authorList>
            <person name="Veith B."/>
            <person name="Herzberg C."/>
            <person name="Steckel S."/>
            <person name="Feesche J."/>
            <person name="Maurer K.H."/>
            <person name="Ehrenreich P."/>
            <person name="Baeumer S."/>
            <person name="Henne A."/>
            <person name="Liesegang H."/>
            <person name="Merkl R."/>
            <person name="Ehrenreich A."/>
            <person name="Gottschalk G."/>
        </authorList>
    </citation>
    <scope>NUCLEOTIDE SEQUENCE [LARGE SCALE GENOMIC DNA]</scope>
    <source>
        <strain>ATCC 14580 / DSM 13 / JCM 2505 / CCUG 7422 / NBRC 12200 / NCIMB 9375 / NCTC 10341 / NRRL NRS-1264 / Gibson 46</strain>
    </source>
</reference>
<reference key="2">
    <citation type="journal article" date="2004" name="Genome Biol.">
        <title>Complete genome sequence of the industrial bacterium Bacillus licheniformis and comparisons with closely related Bacillus species.</title>
        <authorList>
            <person name="Rey M.W."/>
            <person name="Ramaiya P."/>
            <person name="Nelson B.A."/>
            <person name="Brody-Karpin S.D."/>
            <person name="Zaretsky E.J."/>
            <person name="Tang M."/>
            <person name="Lopez de Leon A."/>
            <person name="Xiang H."/>
            <person name="Gusti V."/>
            <person name="Clausen I.G."/>
            <person name="Olsen P.B."/>
            <person name="Rasmussen M.D."/>
            <person name="Andersen J.T."/>
            <person name="Joergensen P.L."/>
            <person name="Larsen T.S."/>
            <person name="Sorokin A."/>
            <person name="Bolotin A."/>
            <person name="Lapidus A."/>
            <person name="Galleron N."/>
            <person name="Ehrlich S.D."/>
            <person name="Berka R.M."/>
        </authorList>
    </citation>
    <scope>NUCLEOTIDE SEQUENCE [LARGE SCALE GENOMIC DNA]</scope>
    <source>
        <strain>ATCC 14580 / DSM 13 / JCM 2505 / CCUG 7422 / NBRC 12200 / NCIMB 9375 / NCTC 10341 / NRRL NRS-1264 / Gibson 46</strain>
    </source>
</reference>
<keyword id="KW-0963">Cytoplasm</keyword>
<keyword id="KW-0275">Fatty acid biosynthesis</keyword>
<keyword id="KW-0276">Fatty acid metabolism</keyword>
<keyword id="KW-0444">Lipid biosynthesis</keyword>
<keyword id="KW-0443">Lipid metabolism</keyword>
<keyword id="KW-0596">Phosphopantetheine</keyword>
<keyword id="KW-0597">Phosphoprotein</keyword>
<keyword id="KW-1185">Reference proteome</keyword>
<evidence type="ECO:0000255" key="1">
    <source>
        <dbReference type="HAMAP-Rule" id="MF_01217"/>
    </source>
</evidence>
<evidence type="ECO:0000255" key="2">
    <source>
        <dbReference type="PROSITE-ProRule" id="PRU00258"/>
    </source>
</evidence>
<proteinExistence type="inferred from homology"/>
<feature type="chain" id="PRO_1000066556" description="Acyl carrier protein">
    <location>
        <begin position="1"/>
        <end position="77"/>
    </location>
</feature>
<feature type="domain" description="Carrier" evidence="2">
    <location>
        <begin position="2"/>
        <end position="77"/>
    </location>
</feature>
<feature type="modified residue" description="O-(pantetheine 4'-phosphoryl)serine" evidence="2">
    <location>
        <position position="37"/>
    </location>
</feature>
<dbReference type="EMBL" id="CP000002">
    <property type="protein sequence ID" value="AAU23348.1"/>
    <property type="molecule type" value="Genomic_DNA"/>
</dbReference>
<dbReference type="EMBL" id="AE017333">
    <property type="protein sequence ID" value="AAU40708.1"/>
    <property type="molecule type" value="Genomic_DNA"/>
</dbReference>
<dbReference type="RefSeq" id="WP_003181706.1">
    <property type="nucleotide sequence ID" value="NC_006322.1"/>
</dbReference>
<dbReference type="SMR" id="Q65JQ6"/>
<dbReference type="STRING" id="279010.BL02316"/>
<dbReference type="GeneID" id="92861594"/>
<dbReference type="KEGG" id="bld:BLi01813"/>
<dbReference type="KEGG" id="bli:BL02316"/>
<dbReference type="eggNOG" id="COG0236">
    <property type="taxonomic scope" value="Bacteria"/>
</dbReference>
<dbReference type="HOGENOM" id="CLU_108696_5_3_9"/>
<dbReference type="UniPathway" id="UPA00094"/>
<dbReference type="Proteomes" id="UP000000606">
    <property type="component" value="Chromosome"/>
</dbReference>
<dbReference type="GO" id="GO:0005829">
    <property type="term" value="C:cytosol"/>
    <property type="evidence" value="ECO:0007669"/>
    <property type="project" value="TreeGrafter"/>
</dbReference>
<dbReference type="GO" id="GO:0016020">
    <property type="term" value="C:membrane"/>
    <property type="evidence" value="ECO:0007669"/>
    <property type="project" value="GOC"/>
</dbReference>
<dbReference type="GO" id="GO:0000035">
    <property type="term" value="F:acyl binding"/>
    <property type="evidence" value="ECO:0007669"/>
    <property type="project" value="TreeGrafter"/>
</dbReference>
<dbReference type="GO" id="GO:0000036">
    <property type="term" value="F:acyl carrier activity"/>
    <property type="evidence" value="ECO:0007669"/>
    <property type="project" value="UniProtKB-UniRule"/>
</dbReference>
<dbReference type="GO" id="GO:0009245">
    <property type="term" value="P:lipid A biosynthetic process"/>
    <property type="evidence" value="ECO:0007669"/>
    <property type="project" value="TreeGrafter"/>
</dbReference>
<dbReference type="FunFam" id="1.10.1200.10:FF:000001">
    <property type="entry name" value="Acyl carrier protein"/>
    <property type="match status" value="1"/>
</dbReference>
<dbReference type="Gene3D" id="1.10.1200.10">
    <property type="entry name" value="ACP-like"/>
    <property type="match status" value="1"/>
</dbReference>
<dbReference type="HAMAP" id="MF_01217">
    <property type="entry name" value="Acyl_carrier"/>
    <property type="match status" value="1"/>
</dbReference>
<dbReference type="InterPro" id="IPR003231">
    <property type="entry name" value="ACP"/>
</dbReference>
<dbReference type="InterPro" id="IPR036736">
    <property type="entry name" value="ACP-like_sf"/>
</dbReference>
<dbReference type="InterPro" id="IPR009081">
    <property type="entry name" value="PP-bd_ACP"/>
</dbReference>
<dbReference type="InterPro" id="IPR006162">
    <property type="entry name" value="Ppantetheine_attach_site"/>
</dbReference>
<dbReference type="NCBIfam" id="TIGR00517">
    <property type="entry name" value="acyl_carrier"/>
    <property type="match status" value="1"/>
</dbReference>
<dbReference type="NCBIfam" id="NF002148">
    <property type="entry name" value="PRK00982.1-2"/>
    <property type="match status" value="1"/>
</dbReference>
<dbReference type="NCBIfam" id="NF002149">
    <property type="entry name" value="PRK00982.1-3"/>
    <property type="match status" value="1"/>
</dbReference>
<dbReference type="NCBIfam" id="NF002150">
    <property type="entry name" value="PRK00982.1-4"/>
    <property type="match status" value="1"/>
</dbReference>
<dbReference type="NCBIfam" id="NF002151">
    <property type="entry name" value="PRK00982.1-5"/>
    <property type="match status" value="1"/>
</dbReference>
<dbReference type="PANTHER" id="PTHR20863">
    <property type="entry name" value="ACYL CARRIER PROTEIN"/>
    <property type="match status" value="1"/>
</dbReference>
<dbReference type="PANTHER" id="PTHR20863:SF76">
    <property type="entry name" value="CARRIER DOMAIN-CONTAINING PROTEIN"/>
    <property type="match status" value="1"/>
</dbReference>
<dbReference type="Pfam" id="PF00550">
    <property type="entry name" value="PP-binding"/>
    <property type="match status" value="1"/>
</dbReference>
<dbReference type="SUPFAM" id="SSF47336">
    <property type="entry name" value="ACP-like"/>
    <property type="match status" value="1"/>
</dbReference>
<dbReference type="PROSITE" id="PS50075">
    <property type="entry name" value="CARRIER"/>
    <property type="match status" value="1"/>
</dbReference>
<dbReference type="PROSITE" id="PS00012">
    <property type="entry name" value="PHOSPHOPANTETHEINE"/>
    <property type="match status" value="1"/>
</dbReference>